<sequence>MASTDPYTPPPLPSPFTNTTPPPQLLTQGAEAHLYKTVFLSPSAPAALKVRPSKPYRHPILDRRLTRQRILQEARCLVKLVREGVNVPAVLALDWEGQSGEKGFGGAWLMMEWIEGMVVRVVLERWEKYMKRNQAGLGAEEFEKEEARVRDLMKRIGHAVGALHKAGVIHGDLTTSNLILRPPTRAEQQPAADETNPSMEGDVVLIDFGLASQSLQDEDRAVDLYVLERAFGSTHPRTEPLFTEVLSGYKESYKGASSALKRLEEVRMRGRKRSMIG</sequence>
<accession>Q4WYU4</accession>
<gene>
    <name type="primary">bud32</name>
    <name type="ORF">AFUA_3G14290</name>
</gene>
<comment type="function">
    <text evidence="1">Component of the EKC/KEOPS complex that is required for the formation of a threonylcarbamoyl group on adenosine at position 37 (t(6)A37) in tRNAs that read codons beginning with adenine. The complex is probably involved in the transfer of the threonylcarbamoyl moiety of threonylcarbamoyl-AMP (TC-AMP) to the N6 group of A37. BUD32 has ATPase activity in the context of the EKC/KEOPS complex and likely plays a supporting role to the catalytic subunit KAE1. The EKC/KEOPS complex also promotes both telomere uncapping and telomere elongation. The complex is required for efficient recruitment of transcriptional coactivators.</text>
</comment>
<comment type="catalytic activity">
    <reaction evidence="1">
        <text>L-seryl-[protein] + ATP = O-phospho-L-seryl-[protein] + ADP + H(+)</text>
        <dbReference type="Rhea" id="RHEA:17989"/>
        <dbReference type="Rhea" id="RHEA-COMP:9863"/>
        <dbReference type="Rhea" id="RHEA-COMP:11604"/>
        <dbReference type="ChEBI" id="CHEBI:15378"/>
        <dbReference type="ChEBI" id="CHEBI:29999"/>
        <dbReference type="ChEBI" id="CHEBI:30616"/>
        <dbReference type="ChEBI" id="CHEBI:83421"/>
        <dbReference type="ChEBI" id="CHEBI:456216"/>
        <dbReference type="EC" id="2.7.11.1"/>
    </reaction>
</comment>
<comment type="catalytic activity">
    <reaction evidence="1">
        <text>L-threonyl-[protein] + ATP = O-phospho-L-threonyl-[protein] + ADP + H(+)</text>
        <dbReference type="Rhea" id="RHEA:46608"/>
        <dbReference type="Rhea" id="RHEA-COMP:11060"/>
        <dbReference type="Rhea" id="RHEA-COMP:11605"/>
        <dbReference type="ChEBI" id="CHEBI:15378"/>
        <dbReference type="ChEBI" id="CHEBI:30013"/>
        <dbReference type="ChEBI" id="CHEBI:30616"/>
        <dbReference type="ChEBI" id="CHEBI:61977"/>
        <dbReference type="ChEBI" id="CHEBI:456216"/>
        <dbReference type="EC" id="2.7.11.1"/>
    </reaction>
</comment>
<comment type="subunit">
    <text evidence="1">Component of the EKC/KEOPS complex composed of at least bud32, cgi121, gon7, kae1 and pcc1; the whole complex dimerizes.</text>
</comment>
<comment type="subcellular location">
    <subcellularLocation>
        <location evidence="1">Cytoplasm</location>
    </subcellularLocation>
    <subcellularLocation>
        <location evidence="1">Nucleus</location>
    </subcellularLocation>
    <subcellularLocation>
        <location evidence="1">Chromosome</location>
        <location evidence="1">Telomere</location>
    </subcellularLocation>
</comment>
<comment type="domain">
    <text evidence="1 2">This protein is considered an atypical serine/threonine kinase, because it lacks the conventional structural elements necessary for the substrate recognition as well as a lysine residue that in all other serine/threonine kinases participates in the catalytic event (By similarity). BUD32 has protein kinase activity in vitro, but in the context of the EKC/KEOPS complex, the catalytic subunit KAE1 switches the activity of BUD32 from kinase into ATPase (By similarity).</text>
</comment>
<comment type="similarity">
    <text evidence="6">Belongs to the protein kinase superfamily. BUD32 family.</text>
</comment>
<proteinExistence type="inferred from homology"/>
<organism>
    <name type="scientific">Aspergillus fumigatus (strain ATCC MYA-4609 / CBS 101355 / FGSC A1100 / Af293)</name>
    <name type="common">Neosartorya fumigata</name>
    <dbReference type="NCBI Taxonomy" id="330879"/>
    <lineage>
        <taxon>Eukaryota</taxon>
        <taxon>Fungi</taxon>
        <taxon>Dikarya</taxon>
        <taxon>Ascomycota</taxon>
        <taxon>Pezizomycotina</taxon>
        <taxon>Eurotiomycetes</taxon>
        <taxon>Eurotiomycetidae</taxon>
        <taxon>Eurotiales</taxon>
        <taxon>Aspergillaceae</taxon>
        <taxon>Aspergillus</taxon>
        <taxon>Aspergillus subgen. Fumigati</taxon>
    </lineage>
</organism>
<keyword id="KW-0010">Activator</keyword>
<keyword id="KW-0067">ATP-binding</keyword>
<keyword id="KW-0158">Chromosome</keyword>
<keyword id="KW-0963">Cytoplasm</keyword>
<keyword id="KW-0378">Hydrolase</keyword>
<keyword id="KW-0418">Kinase</keyword>
<keyword id="KW-0547">Nucleotide-binding</keyword>
<keyword id="KW-0539">Nucleus</keyword>
<keyword id="KW-0597">Phosphoprotein</keyword>
<keyword id="KW-1185">Reference proteome</keyword>
<keyword id="KW-0723">Serine/threonine-protein kinase</keyword>
<keyword id="KW-0779">Telomere</keyword>
<keyword id="KW-0804">Transcription</keyword>
<keyword id="KW-0805">Transcription regulation</keyword>
<keyword id="KW-0808">Transferase</keyword>
<keyword id="KW-0819">tRNA processing</keyword>
<name>BUD32_ASPFU</name>
<evidence type="ECO:0000250" key="1">
    <source>
        <dbReference type="UniProtKB" id="P53323"/>
    </source>
</evidence>
<evidence type="ECO:0000250" key="2">
    <source>
        <dbReference type="UniProtKB" id="Q9UYB9"/>
    </source>
</evidence>
<evidence type="ECO:0000255" key="3">
    <source>
        <dbReference type="PROSITE-ProRule" id="PRU00159"/>
    </source>
</evidence>
<evidence type="ECO:0000255" key="4">
    <source>
        <dbReference type="PROSITE-ProRule" id="PRU10028"/>
    </source>
</evidence>
<evidence type="ECO:0000256" key="5">
    <source>
        <dbReference type="SAM" id="MobiDB-lite"/>
    </source>
</evidence>
<evidence type="ECO:0000305" key="6"/>
<protein>
    <recommendedName>
        <fullName>EKC/KEOPS complex subunit bud32</fullName>
        <ecNumber evidence="2">3.6.-.-</ecNumber>
    </recommendedName>
    <alternativeName>
        <fullName>Atypical serine/threonine protein kinase bud32</fullName>
        <ecNumber evidence="1">2.7.11.1</ecNumber>
    </alternativeName>
</protein>
<dbReference type="EC" id="3.6.-.-" evidence="2"/>
<dbReference type="EC" id="2.7.11.1" evidence="1"/>
<dbReference type="EMBL" id="AAHF01000002">
    <property type="protein sequence ID" value="EAL92159.1"/>
    <property type="molecule type" value="Genomic_DNA"/>
</dbReference>
<dbReference type="RefSeq" id="XP_754197.1">
    <property type="nucleotide sequence ID" value="XM_749104.1"/>
</dbReference>
<dbReference type="SMR" id="Q4WYU4"/>
<dbReference type="FunCoup" id="Q4WYU4">
    <property type="interactions" value="888"/>
</dbReference>
<dbReference type="STRING" id="330879.Q4WYU4"/>
<dbReference type="EnsemblFungi" id="EAL92159">
    <property type="protein sequence ID" value="EAL92159"/>
    <property type="gene ID" value="AFUA_3G14290"/>
</dbReference>
<dbReference type="GeneID" id="3511826"/>
<dbReference type="KEGG" id="afm:AFUA_3G14290"/>
<dbReference type="VEuPathDB" id="FungiDB:Afu3g14290"/>
<dbReference type="eggNOG" id="KOG3087">
    <property type="taxonomic scope" value="Eukaryota"/>
</dbReference>
<dbReference type="HOGENOM" id="CLU_063953_1_0_1"/>
<dbReference type="InParanoid" id="Q4WYU4"/>
<dbReference type="OMA" id="HKLYMEY"/>
<dbReference type="OrthoDB" id="3399at2759"/>
<dbReference type="Proteomes" id="UP000002530">
    <property type="component" value="Chromosome 3"/>
</dbReference>
<dbReference type="GO" id="GO:0000781">
    <property type="term" value="C:chromosome, telomeric region"/>
    <property type="evidence" value="ECO:0007669"/>
    <property type="project" value="UniProtKB-SubCell"/>
</dbReference>
<dbReference type="GO" id="GO:0005829">
    <property type="term" value="C:cytosol"/>
    <property type="evidence" value="ECO:0000318"/>
    <property type="project" value="GO_Central"/>
</dbReference>
<dbReference type="GO" id="GO:0000408">
    <property type="term" value="C:EKC/KEOPS complex"/>
    <property type="evidence" value="ECO:0000318"/>
    <property type="project" value="GO_Central"/>
</dbReference>
<dbReference type="GO" id="GO:0005634">
    <property type="term" value="C:nucleus"/>
    <property type="evidence" value="ECO:0000318"/>
    <property type="project" value="GO_Central"/>
</dbReference>
<dbReference type="GO" id="GO:0005524">
    <property type="term" value="F:ATP binding"/>
    <property type="evidence" value="ECO:0007669"/>
    <property type="project" value="UniProtKB-KW"/>
</dbReference>
<dbReference type="GO" id="GO:0016787">
    <property type="term" value="F:hydrolase activity"/>
    <property type="evidence" value="ECO:0007669"/>
    <property type="project" value="UniProtKB-KW"/>
</dbReference>
<dbReference type="GO" id="GO:0106310">
    <property type="term" value="F:protein serine kinase activity"/>
    <property type="evidence" value="ECO:0007669"/>
    <property type="project" value="RHEA"/>
</dbReference>
<dbReference type="GO" id="GO:0004674">
    <property type="term" value="F:protein serine/threonine kinase activity"/>
    <property type="evidence" value="ECO:0000318"/>
    <property type="project" value="GO_Central"/>
</dbReference>
<dbReference type="GO" id="GO:0008033">
    <property type="term" value="P:tRNA processing"/>
    <property type="evidence" value="ECO:0007669"/>
    <property type="project" value="UniProtKB-KW"/>
</dbReference>
<dbReference type="GO" id="GO:0070525">
    <property type="term" value="P:tRNA threonylcarbamoyladenosine metabolic process"/>
    <property type="evidence" value="ECO:0000318"/>
    <property type="project" value="GO_Central"/>
</dbReference>
<dbReference type="FunFam" id="3.30.200.20:FF:000603">
    <property type="entry name" value="EKC/KEOPS complex subunit bud32"/>
    <property type="match status" value="1"/>
</dbReference>
<dbReference type="FunFam" id="1.10.510.10:FF:000845">
    <property type="entry name" value="Probable bifunctional tRNA threonylcarbamoyladenosine biosynthesis protein"/>
    <property type="match status" value="1"/>
</dbReference>
<dbReference type="Gene3D" id="3.30.200.20">
    <property type="entry name" value="Phosphorylase Kinase, domain 1"/>
    <property type="match status" value="1"/>
</dbReference>
<dbReference type="Gene3D" id="1.10.510.10">
    <property type="entry name" value="Transferase(Phosphotransferase) domain 1"/>
    <property type="match status" value="1"/>
</dbReference>
<dbReference type="InterPro" id="IPR022495">
    <property type="entry name" value="Bud32"/>
</dbReference>
<dbReference type="InterPro" id="IPR011009">
    <property type="entry name" value="Kinase-like_dom_sf"/>
</dbReference>
<dbReference type="InterPro" id="IPR000719">
    <property type="entry name" value="Prot_kinase_dom"/>
</dbReference>
<dbReference type="InterPro" id="IPR008266">
    <property type="entry name" value="Tyr_kinase_AS"/>
</dbReference>
<dbReference type="NCBIfam" id="TIGR03724">
    <property type="entry name" value="arch_bud32"/>
    <property type="match status" value="1"/>
</dbReference>
<dbReference type="PANTHER" id="PTHR12209:SF0">
    <property type="entry name" value="EKC_KEOPS COMPLEX SUBUNIT TP53RK"/>
    <property type="match status" value="1"/>
</dbReference>
<dbReference type="PANTHER" id="PTHR12209">
    <property type="entry name" value="NON-SPECIFIC SERINE/THREONINE PROTEIN KINASE"/>
    <property type="match status" value="1"/>
</dbReference>
<dbReference type="Pfam" id="PF06293">
    <property type="entry name" value="Kdo"/>
    <property type="match status" value="1"/>
</dbReference>
<dbReference type="SMART" id="SM00220">
    <property type="entry name" value="S_TKc"/>
    <property type="match status" value="1"/>
</dbReference>
<dbReference type="SUPFAM" id="SSF56112">
    <property type="entry name" value="Protein kinase-like (PK-like)"/>
    <property type="match status" value="1"/>
</dbReference>
<dbReference type="PROSITE" id="PS50011">
    <property type="entry name" value="PROTEIN_KINASE_DOM"/>
    <property type="match status" value="1"/>
</dbReference>
<dbReference type="PROSITE" id="PS00109">
    <property type="entry name" value="PROTEIN_KINASE_TYR"/>
    <property type="match status" value="1"/>
</dbReference>
<feature type="chain" id="PRO_0000278906" description="EKC/KEOPS complex subunit bud32">
    <location>
        <begin position="1"/>
        <end position="277"/>
    </location>
</feature>
<feature type="domain" description="Protein kinase" evidence="3">
    <location>
        <begin position="20"/>
        <end position="277"/>
    </location>
</feature>
<feature type="region of interest" description="Disordered" evidence="5">
    <location>
        <begin position="1"/>
        <end position="24"/>
    </location>
</feature>
<feature type="compositionally biased region" description="Pro residues" evidence="5">
    <location>
        <begin position="7"/>
        <end position="24"/>
    </location>
</feature>
<feature type="active site" description="Proton acceptor" evidence="3 4">
    <location>
        <position position="172"/>
    </location>
</feature>
<feature type="binding site" evidence="3">
    <location>
        <begin position="26"/>
        <end position="34"/>
    </location>
    <ligand>
        <name>ATP</name>
        <dbReference type="ChEBI" id="CHEBI:30616"/>
    </ligand>
</feature>
<feature type="binding site" evidence="3">
    <location>
        <position position="49"/>
    </location>
    <ligand>
        <name>ATP</name>
        <dbReference type="ChEBI" id="CHEBI:30616"/>
    </ligand>
</feature>
<reference key="1">
    <citation type="journal article" date="2005" name="Nature">
        <title>Genomic sequence of the pathogenic and allergenic filamentous fungus Aspergillus fumigatus.</title>
        <authorList>
            <person name="Nierman W.C."/>
            <person name="Pain A."/>
            <person name="Anderson M.J."/>
            <person name="Wortman J.R."/>
            <person name="Kim H.S."/>
            <person name="Arroyo J."/>
            <person name="Berriman M."/>
            <person name="Abe K."/>
            <person name="Archer D.B."/>
            <person name="Bermejo C."/>
            <person name="Bennett J.W."/>
            <person name="Bowyer P."/>
            <person name="Chen D."/>
            <person name="Collins M."/>
            <person name="Coulsen R."/>
            <person name="Davies R."/>
            <person name="Dyer P.S."/>
            <person name="Farman M.L."/>
            <person name="Fedorova N."/>
            <person name="Fedorova N.D."/>
            <person name="Feldblyum T.V."/>
            <person name="Fischer R."/>
            <person name="Fosker N."/>
            <person name="Fraser A."/>
            <person name="Garcia J.L."/>
            <person name="Garcia M.J."/>
            <person name="Goble A."/>
            <person name="Goldman G.H."/>
            <person name="Gomi K."/>
            <person name="Griffith-Jones S."/>
            <person name="Gwilliam R."/>
            <person name="Haas B.J."/>
            <person name="Haas H."/>
            <person name="Harris D.E."/>
            <person name="Horiuchi H."/>
            <person name="Huang J."/>
            <person name="Humphray S."/>
            <person name="Jimenez J."/>
            <person name="Keller N."/>
            <person name="Khouri H."/>
            <person name="Kitamoto K."/>
            <person name="Kobayashi T."/>
            <person name="Konzack S."/>
            <person name="Kulkarni R."/>
            <person name="Kumagai T."/>
            <person name="Lafton A."/>
            <person name="Latge J.-P."/>
            <person name="Li W."/>
            <person name="Lord A."/>
            <person name="Lu C."/>
            <person name="Majoros W.H."/>
            <person name="May G.S."/>
            <person name="Miller B.L."/>
            <person name="Mohamoud Y."/>
            <person name="Molina M."/>
            <person name="Monod M."/>
            <person name="Mouyna I."/>
            <person name="Mulligan S."/>
            <person name="Murphy L.D."/>
            <person name="O'Neil S."/>
            <person name="Paulsen I."/>
            <person name="Penalva M.A."/>
            <person name="Pertea M."/>
            <person name="Price C."/>
            <person name="Pritchard B.L."/>
            <person name="Quail M.A."/>
            <person name="Rabbinowitsch E."/>
            <person name="Rawlins N."/>
            <person name="Rajandream M.A."/>
            <person name="Reichard U."/>
            <person name="Renauld H."/>
            <person name="Robson G.D."/>
            <person name="Rodriguez de Cordoba S."/>
            <person name="Rodriguez-Pena J.M."/>
            <person name="Ronning C.M."/>
            <person name="Rutter S."/>
            <person name="Salzberg S.L."/>
            <person name="Sanchez M."/>
            <person name="Sanchez-Ferrero J.C."/>
            <person name="Saunders D."/>
            <person name="Seeger K."/>
            <person name="Squares R."/>
            <person name="Squares S."/>
            <person name="Takeuchi M."/>
            <person name="Tekaia F."/>
            <person name="Turner G."/>
            <person name="Vazquez de Aldana C.R."/>
            <person name="Weidman J."/>
            <person name="White O."/>
            <person name="Woodward J.R."/>
            <person name="Yu J.-H."/>
            <person name="Fraser C.M."/>
            <person name="Galagan J.E."/>
            <person name="Asai K."/>
            <person name="Machida M."/>
            <person name="Hall N."/>
            <person name="Barrell B.G."/>
            <person name="Denning D.W."/>
        </authorList>
    </citation>
    <scope>NUCLEOTIDE SEQUENCE [LARGE SCALE GENOMIC DNA]</scope>
    <source>
        <strain>ATCC MYA-4609 / CBS 101355 / FGSC A1100 / Af293</strain>
    </source>
</reference>